<comment type="function">
    <text evidence="3">Cleaves the 2'-5' phosphodiester linkage at the branch point of lariat intron pre-mRNAs after splicing and converts them into linear molecules that are subsequently degraded. It thereby facilitates ribonucleotide turnover.</text>
</comment>
<comment type="cofactor">
    <cofactor evidence="2">
        <name>Fe(2+)</name>
        <dbReference type="ChEBI" id="CHEBI:29033"/>
    </cofactor>
    <cofactor evidence="2">
        <name>Zn(2+)</name>
        <dbReference type="ChEBI" id="CHEBI:29105"/>
    </cofactor>
    <cofactor evidence="3">
        <name>Mn(2+)</name>
        <dbReference type="ChEBI" id="CHEBI:29035"/>
    </cofactor>
    <text evidence="2">Binds 2 divalent metal cations per subunit.</text>
</comment>
<comment type="activity regulation">
    <text evidence="2">Active in presence of diverse metals including Fe(2+), Zn(2+), Mn(2+) (By similarity). Binds two metal cations in two adjacent alpha and beta metal-binding pockets (By similarity).</text>
</comment>
<comment type="subcellular location">
    <subcellularLocation>
        <location evidence="5">Nucleus</location>
    </subcellularLocation>
</comment>
<comment type="similarity">
    <text evidence="5">Belongs to the lariat debranching enzyme family.</text>
</comment>
<feature type="chain" id="PRO_0000250368" description="Lariat debranching enzyme">
    <location>
        <begin position="1"/>
        <end position="537"/>
    </location>
</feature>
<feature type="region of interest" description="Lariat recognition loop" evidence="1">
    <location>
        <begin position="124"/>
        <end position="154"/>
    </location>
</feature>
<feature type="region of interest" description="Disordered" evidence="4">
    <location>
        <begin position="242"/>
        <end position="272"/>
    </location>
</feature>
<feature type="region of interest" description="Disordered" evidence="4">
    <location>
        <begin position="473"/>
        <end position="537"/>
    </location>
</feature>
<feature type="compositionally biased region" description="Low complexity" evidence="4">
    <location>
        <begin position="251"/>
        <end position="260"/>
    </location>
</feature>
<feature type="binding site" evidence="1">
    <location>
        <position position="8"/>
    </location>
    <ligand>
        <name>a divalent metal cation</name>
        <dbReference type="ChEBI" id="CHEBI:60240"/>
        <label>1</label>
    </ligand>
</feature>
<feature type="binding site" evidence="1">
    <location>
        <position position="10"/>
    </location>
    <ligand>
        <name>a divalent metal cation</name>
        <dbReference type="ChEBI" id="CHEBI:60240"/>
        <label>1</label>
    </ligand>
</feature>
<feature type="binding site" evidence="1">
    <location>
        <position position="39"/>
    </location>
    <ligand>
        <name>a divalent metal cation</name>
        <dbReference type="ChEBI" id="CHEBI:60240"/>
        <label>2</label>
    </ligand>
</feature>
<feature type="binding site" evidence="1">
    <location>
        <position position="84"/>
    </location>
    <ligand>
        <name>a divalent metal cation</name>
        <dbReference type="ChEBI" id="CHEBI:60240"/>
        <label>2</label>
    </ligand>
</feature>
<feature type="binding site" evidence="1">
    <location>
        <position position="174"/>
    </location>
    <ligand>
        <name>a divalent metal cation</name>
        <dbReference type="ChEBI" id="CHEBI:60240"/>
        <label>2</label>
    </ligand>
</feature>
<feature type="binding site" evidence="1">
    <location>
        <position position="226"/>
    </location>
    <ligand>
        <name>a divalent metal cation</name>
        <dbReference type="ChEBI" id="CHEBI:60240"/>
        <label>2</label>
    </ligand>
</feature>
<feature type="binding site" evidence="1">
    <location>
        <position position="228"/>
    </location>
    <ligand>
        <name>a divalent metal cation</name>
        <dbReference type="ChEBI" id="CHEBI:60240"/>
        <label>1</label>
    </ligand>
</feature>
<proteinExistence type="inferred from homology"/>
<evidence type="ECO:0000250" key="1">
    <source>
        <dbReference type="UniProtKB" id="C4M1P9"/>
    </source>
</evidence>
<evidence type="ECO:0000250" key="2">
    <source>
        <dbReference type="UniProtKB" id="P24309"/>
    </source>
</evidence>
<evidence type="ECO:0000250" key="3">
    <source>
        <dbReference type="UniProtKB" id="Q9UK59"/>
    </source>
</evidence>
<evidence type="ECO:0000256" key="4">
    <source>
        <dbReference type="SAM" id="MobiDB-lite"/>
    </source>
</evidence>
<evidence type="ECO:0000305" key="5"/>
<protein>
    <recommendedName>
        <fullName>Lariat debranching enzyme</fullName>
        <ecNumber evidence="3">3.1.4.-</ecNumber>
    </recommendedName>
</protein>
<gene>
    <name type="primary">DBR1</name>
    <name type="ORF">GA20707</name>
</gene>
<dbReference type="EC" id="3.1.4.-" evidence="3"/>
<dbReference type="EMBL" id="CH379067">
    <property type="protein sequence ID" value="EAL31314.2"/>
    <property type="molecule type" value="Genomic_DNA"/>
</dbReference>
<dbReference type="SMR" id="Q29FE1"/>
<dbReference type="FunCoup" id="Q29FE1">
    <property type="interactions" value="2218"/>
</dbReference>
<dbReference type="STRING" id="46245.Q29FE1"/>
<dbReference type="eggNOG" id="KOG2863">
    <property type="taxonomic scope" value="Eukaryota"/>
</dbReference>
<dbReference type="HOGENOM" id="CLU_005893_0_0_1"/>
<dbReference type="InParanoid" id="Q29FE1"/>
<dbReference type="OMA" id="GIDDPLC"/>
<dbReference type="Proteomes" id="UP000001819">
    <property type="component" value="Unplaced"/>
</dbReference>
<dbReference type="GO" id="GO:0005634">
    <property type="term" value="C:nucleus"/>
    <property type="evidence" value="ECO:0000250"/>
    <property type="project" value="UniProtKB"/>
</dbReference>
<dbReference type="GO" id="GO:0046872">
    <property type="term" value="F:metal ion binding"/>
    <property type="evidence" value="ECO:0007669"/>
    <property type="project" value="UniProtKB-KW"/>
</dbReference>
<dbReference type="GO" id="GO:0008419">
    <property type="term" value="F:RNA lariat debranching enzyme activity"/>
    <property type="evidence" value="ECO:0000250"/>
    <property type="project" value="UniProtKB"/>
</dbReference>
<dbReference type="GO" id="GO:0000398">
    <property type="term" value="P:mRNA splicing, via spliceosome"/>
    <property type="evidence" value="ECO:0007669"/>
    <property type="project" value="TreeGrafter"/>
</dbReference>
<dbReference type="GO" id="GO:0000375">
    <property type="term" value="P:RNA splicing, via transesterification reactions"/>
    <property type="evidence" value="ECO:0000250"/>
    <property type="project" value="UniProtKB"/>
</dbReference>
<dbReference type="CDD" id="cd00844">
    <property type="entry name" value="MPP_Dbr1_N"/>
    <property type="match status" value="1"/>
</dbReference>
<dbReference type="FunFam" id="3.60.21.10:FF:000035">
    <property type="entry name" value="Lariat debranching enzyme"/>
    <property type="match status" value="1"/>
</dbReference>
<dbReference type="Gene3D" id="3.60.21.10">
    <property type="match status" value="1"/>
</dbReference>
<dbReference type="InterPro" id="IPR004843">
    <property type="entry name" value="Calcineurin-like_PHP_ApaH"/>
</dbReference>
<dbReference type="InterPro" id="IPR007708">
    <property type="entry name" value="DBR1_C"/>
</dbReference>
<dbReference type="InterPro" id="IPR041816">
    <property type="entry name" value="Dbr1_N"/>
</dbReference>
<dbReference type="InterPro" id="IPR029052">
    <property type="entry name" value="Metallo-depent_PP-like"/>
</dbReference>
<dbReference type="PANTHER" id="PTHR12849:SF0">
    <property type="entry name" value="LARIAT DEBRANCHING ENZYME"/>
    <property type="match status" value="1"/>
</dbReference>
<dbReference type="PANTHER" id="PTHR12849">
    <property type="entry name" value="RNA LARIAT DEBRANCHING ENZYME"/>
    <property type="match status" value="1"/>
</dbReference>
<dbReference type="Pfam" id="PF05011">
    <property type="entry name" value="DBR1"/>
    <property type="match status" value="1"/>
</dbReference>
<dbReference type="Pfam" id="PF00149">
    <property type="entry name" value="Metallophos"/>
    <property type="match status" value="1"/>
</dbReference>
<dbReference type="SMART" id="SM01124">
    <property type="entry name" value="DBR1"/>
    <property type="match status" value="1"/>
</dbReference>
<dbReference type="SUPFAM" id="SSF56300">
    <property type="entry name" value="Metallo-dependent phosphatases"/>
    <property type="match status" value="1"/>
</dbReference>
<keyword id="KW-0378">Hydrolase</keyword>
<keyword id="KW-0408">Iron</keyword>
<keyword id="KW-0464">Manganese</keyword>
<keyword id="KW-0479">Metal-binding</keyword>
<keyword id="KW-0507">mRNA processing</keyword>
<keyword id="KW-0539">Nucleus</keyword>
<keyword id="KW-1185">Reference proteome</keyword>
<keyword id="KW-0862">Zinc</keyword>
<name>DBR1_DROPS</name>
<organism>
    <name type="scientific">Drosophila pseudoobscura pseudoobscura</name>
    <name type="common">Fruit fly</name>
    <dbReference type="NCBI Taxonomy" id="46245"/>
    <lineage>
        <taxon>Eukaryota</taxon>
        <taxon>Metazoa</taxon>
        <taxon>Ecdysozoa</taxon>
        <taxon>Arthropoda</taxon>
        <taxon>Hexapoda</taxon>
        <taxon>Insecta</taxon>
        <taxon>Pterygota</taxon>
        <taxon>Neoptera</taxon>
        <taxon>Endopterygota</taxon>
        <taxon>Diptera</taxon>
        <taxon>Brachycera</taxon>
        <taxon>Muscomorpha</taxon>
        <taxon>Ephydroidea</taxon>
        <taxon>Drosophilidae</taxon>
        <taxon>Drosophila</taxon>
        <taxon>Sophophora</taxon>
    </lineage>
</organism>
<reference key="1">
    <citation type="journal article" date="2005" name="Genome Res.">
        <title>Comparative genome sequencing of Drosophila pseudoobscura: chromosomal, gene, and cis-element evolution.</title>
        <authorList>
            <person name="Richards S."/>
            <person name="Liu Y."/>
            <person name="Bettencourt B.R."/>
            <person name="Hradecky P."/>
            <person name="Letovsky S."/>
            <person name="Nielsen R."/>
            <person name="Thornton K."/>
            <person name="Hubisz M.J."/>
            <person name="Chen R."/>
            <person name="Meisel R.P."/>
            <person name="Couronne O."/>
            <person name="Hua S."/>
            <person name="Smith M.A."/>
            <person name="Zhang P."/>
            <person name="Liu J."/>
            <person name="Bussemaker H.J."/>
            <person name="van Batenburg M.F."/>
            <person name="Howells S.L."/>
            <person name="Scherer S.E."/>
            <person name="Sodergren E."/>
            <person name="Matthews B.B."/>
            <person name="Crosby M.A."/>
            <person name="Schroeder A.J."/>
            <person name="Ortiz-Barrientos D."/>
            <person name="Rives C.M."/>
            <person name="Metzker M.L."/>
            <person name="Muzny D.M."/>
            <person name="Scott G."/>
            <person name="Steffen D."/>
            <person name="Wheeler D.A."/>
            <person name="Worley K.C."/>
            <person name="Havlak P."/>
            <person name="Durbin K.J."/>
            <person name="Egan A."/>
            <person name="Gill R."/>
            <person name="Hume J."/>
            <person name="Morgan M.B."/>
            <person name="Miner G."/>
            <person name="Hamilton C."/>
            <person name="Huang Y."/>
            <person name="Waldron L."/>
            <person name="Verduzco D."/>
            <person name="Clerc-Blankenburg K.P."/>
            <person name="Dubchak I."/>
            <person name="Noor M.A.F."/>
            <person name="Anderson W."/>
            <person name="White K.P."/>
            <person name="Clark A.G."/>
            <person name="Schaeffer S.W."/>
            <person name="Gelbart W.M."/>
            <person name="Weinstock G.M."/>
            <person name="Gibbs R.A."/>
        </authorList>
    </citation>
    <scope>NUCLEOTIDE SEQUENCE [LARGE SCALE GENOMIC DNA]</scope>
    <source>
        <strain>MV2-25 / Tucson 14011-0121.94</strain>
    </source>
</reference>
<accession>Q29FE1</accession>
<sequence>MKIAIEGCAHGELERIYDTIACIEKESNTKIDLLLCCGDFQSTRNLEDLQTMAVPKKYLDICTFYKYYSGECVAPVLTIFIGGNHEASNYLQELPYGGWVAPNIYYLGYAGVVNVNGVRIAGISGIYKGHDFLRGHHEFPPYTESTCRSVYHVRQLEVFRLKQLSGKIDIFLSHDWPTGIYEYGNKAQLLRKKPYFAADMESGQLGSRPLEELLKAVQPSYWFAAHLHCKFAALVPHQNATKAPTKMGDGSSSSSSSSSSESDDEESTSRLPPKPVAVTKFLALDKCLPRRAFLQVLDIPSEAIEGNPTFEYDAEWLVILQSTNHLISVKENYYYLPGKKAGAIAERFNFTPTEEELDSLTTKFQSLKIPENFQRTVPAFDPQEQSNYKHMVVGQPTAHLNPQSNTFCSVLGVDDPLCLALLANGKDLPAVADQCQDQEPIEGSSPPPEPLVTPSKRKLNLFLPAPTVTADATAAEKDDSVIDLPEEDEDPKTAETAESEAVDNPKVKAVPPPPSSPPSVKKLKRRNQNIYQAEDDD</sequence>